<organism>
    <name type="scientific">Schizosaccharomyces pombe (strain 972 / ATCC 24843)</name>
    <name type="common">Fission yeast</name>
    <dbReference type="NCBI Taxonomy" id="284812"/>
    <lineage>
        <taxon>Eukaryota</taxon>
        <taxon>Fungi</taxon>
        <taxon>Dikarya</taxon>
        <taxon>Ascomycota</taxon>
        <taxon>Taphrinomycotina</taxon>
        <taxon>Schizosaccharomycetes</taxon>
        <taxon>Schizosaccharomycetales</taxon>
        <taxon>Schizosaccharomycetaceae</taxon>
        <taxon>Schizosaccharomyces</taxon>
    </lineage>
</organism>
<name>ALG12_SCHPO</name>
<feature type="chain" id="PRO_0000215785" description="Probable Dol-P-Man:Man(7)GlcNAc(2)-PP-Dol alpha-1,6-mannosyltransferase">
    <location>
        <begin position="1"/>
        <end position="546"/>
    </location>
</feature>
<feature type="transmembrane region" description="Helical" evidence="2">
    <location>
        <begin position="5"/>
        <end position="25"/>
    </location>
</feature>
<feature type="transmembrane region" description="Helical" evidence="2">
    <location>
        <begin position="67"/>
        <end position="87"/>
    </location>
</feature>
<feature type="transmembrane region" description="Helical" evidence="2">
    <location>
        <begin position="113"/>
        <end position="133"/>
    </location>
</feature>
<feature type="transmembrane region" description="Helical" evidence="2">
    <location>
        <begin position="166"/>
        <end position="186"/>
    </location>
</feature>
<feature type="transmembrane region" description="Helical" evidence="2">
    <location>
        <begin position="200"/>
        <end position="220"/>
    </location>
</feature>
<feature type="transmembrane region" description="Helical" evidence="2">
    <location>
        <begin position="258"/>
        <end position="278"/>
    </location>
</feature>
<feature type="transmembrane region" description="Helical" evidence="2">
    <location>
        <begin position="283"/>
        <end position="303"/>
    </location>
</feature>
<feature type="transmembrane region" description="Helical" evidence="2">
    <location>
        <begin position="305"/>
        <end position="325"/>
    </location>
</feature>
<feature type="transmembrane region" description="Helical" evidence="2">
    <location>
        <begin position="340"/>
        <end position="360"/>
    </location>
</feature>
<keyword id="KW-0256">Endoplasmic reticulum</keyword>
<keyword id="KW-0328">Glycosyltransferase</keyword>
<keyword id="KW-0472">Membrane</keyword>
<keyword id="KW-1185">Reference proteome</keyword>
<keyword id="KW-0808">Transferase</keyword>
<keyword id="KW-0812">Transmembrane</keyword>
<keyword id="KW-1133">Transmembrane helix</keyword>
<sequence>MTSKESICWYLANILLVTCIGYYSYKTPFTKVEESFAMQAIHDIQTYRWDLSKYDHLEFPGAVKRSFIPSLFIAVLSYIPSWFVNPLLAARWTIGYLSWESMNSVSCSISKRFGTLSGALFILFSCAQFHLVYYMSRPLSNIFGLIATNHSLSLLLKNNYYGSISILVFAAAIVRSEIALLLMCLILPLLLQRRITLSKLLLVGISSSLAAVGASFLIDSYFWGAWCWPELEAFLFNVVEGKSSDWGTSPFYYYFVRLPWLFLNPTTLLFLLISFVYIKPARLLIYVPLFFIFVYSFLGHKEWRFIIYSIPWFNAASAIGASLCFNASKFGKKIFEILRLMFFSGIIFGFIGSSFLLYVFQYAYPGGLALTRLYEIENHPQVSVHMDVYPCMTGITRFSQLPSWYYDKTEDPKMLSNSLFISQFDYLITEDPESYNDTFDVIESVNSNTKIPILPKWLSNHIPREISIRNPAQPVYILANKKARATKPAAVDDYSSFIGHKVDEIKLWPPIYRVVSPDTLLTRDYREDRLNFFIDKDRILTHITQG</sequence>
<comment type="function">
    <text evidence="1">Mannosyltransferase that operates in the biosynthetic pathway of dolichol-linked oligosaccharides, the glycan precursors employed in protein asparagine (N)-glycosylation. The assembly of dolichol-linked oligosaccharides begins on the cytosolic side of the endoplasmic reticulum membrane and finishes in its lumen. The sequential addition of sugars to dolichol pyrophosphate produces dolichol-linked oligosaccharides containing fourteen sugars, including two GlcNAcs, nine mannoses and three glucoses. Once assembled, the oligosaccharide is transferred from the lipid to nascent proteins by oligosaccharyltransferases. In the lumen of the endoplasmic reticulum, adds the eighth mannose residue in an alpha-1,6 linkage onto Man(7)GlcNAc(2)-PP-dolichol to produce Man(8)GlcNAc(2)-PP-dolichol.</text>
</comment>
<comment type="catalytic activity">
    <reaction evidence="1">
        <text>an alpha-D-Man-(1-&gt;2)-alpha-D-Man-(1-&gt;2)-alpha-D-Man-(1-&gt;3)-[alpha-D-Man-(1-&gt;2)-alpha-D-Man-(1-&gt;3)-alpha-D-Man-(1-&gt;6)]-beta-D-Man-(1-&gt;4)-beta-D-GlcNAc-(1-&gt;4)-alpha-D-GlcNAc-diphospho-di-trans,poly-cis-dolichol + a di-trans,poly-cis-dolichyl beta-D-mannosyl phosphate = an alpha-D-Man-(1-&gt;2)-alpha-D-Man-(1-&gt;2)-alpha-D-Man-(1-&gt;3)-[alpha-D-Man-(1-&gt;2)-alpha-D-Man-(1-&gt;3)-[alpha-D-Man-(1-&gt;6)]-alpha-D-Man-(1-&gt;6)]-beta-D-Man-(1-&gt;4)-beta-D-GlcNAc-(1-&gt;4)-alpha-D-GlcNAc-diphospho-di-trans,poly-cis-dolichol + a di-trans,poly-cis-dolichyl phosphate + H(+)</text>
        <dbReference type="Rhea" id="RHEA:29535"/>
        <dbReference type="Rhea" id="RHEA-COMP:19498"/>
        <dbReference type="Rhea" id="RHEA-COMP:19501"/>
        <dbReference type="Rhea" id="RHEA-COMP:19518"/>
        <dbReference type="Rhea" id="RHEA-COMP:19519"/>
        <dbReference type="ChEBI" id="CHEBI:15378"/>
        <dbReference type="ChEBI" id="CHEBI:57683"/>
        <dbReference type="ChEBI" id="CHEBI:58211"/>
        <dbReference type="ChEBI" id="CHEBI:132517"/>
        <dbReference type="ChEBI" id="CHEBI:132519"/>
        <dbReference type="EC" id="2.4.1.260"/>
    </reaction>
    <physiologicalReaction direction="left-to-right" evidence="1">
        <dbReference type="Rhea" id="RHEA:29536"/>
    </physiologicalReaction>
</comment>
<comment type="pathway">
    <text evidence="1">Protein modification; protein glycosylation.</text>
</comment>
<comment type="subcellular location">
    <subcellularLocation>
        <location evidence="4">Endoplasmic reticulum membrane</location>
        <topology evidence="2">Multi-pass membrane protein</topology>
    </subcellularLocation>
</comment>
<comment type="similarity">
    <text evidence="3">Belongs to the glycosyltransferase 22 family.</text>
</comment>
<evidence type="ECO:0000250" key="1">
    <source>
        <dbReference type="UniProtKB" id="P53730"/>
    </source>
</evidence>
<evidence type="ECO:0000255" key="2"/>
<evidence type="ECO:0000305" key="3"/>
<evidence type="ECO:0000305" key="4">
    <source>
    </source>
</evidence>
<proteinExistence type="inferred from homology"/>
<accession>Q9USD4</accession>
<accession>O74753</accession>
<reference key="1">
    <citation type="journal article" date="2002" name="Nature">
        <title>The genome sequence of Schizosaccharomyces pombe.</title>
        <authorList>
            <person name="Wood V."/>
            <person name="Gwilliam R."/>
            <person name="Rajandream M.A."/>
            <person name="Lyne M.H."/>
            <person name="Lyne R."/>
            <person name="Stewart A."/>
            <person name="Sgouros J.G."/>
            <person name="Peat N."/>
            <person name="Hayles J."/>
            <person name="Baker S.G."/>
            <person name="Basham D."/>
            <person name="Bowman S."/>
            <person name="Brooks K."/>
            <person name="Brown D."/>
            <person name="Brown S."/>
            <person name="Chillingworth T."/>
            <person name="Churcher C.M."/>
            <person name="Collins M."/>
            <person name="Connor R."/>
            <person name="Cronin A."/>
            <person name="Davis P."/>
            <person name="Feltwell T."/>
            <person name="Fraser A."/>
            <person name="Gentles S."/>
            <person name="Goble A."/>
            <person name="Hamlin N."/>
            <person name="Harris D.E."/>
            <person name="Hidalgo J."/>
            <person name="Hodgson G."/>
            <person name="Holroyd S."/>
            <person name="Hornsby T."/>
            <person name="Howarth S."/>
            <person name="Huckle E.J."/>
            <person name="Hunt S."/>
            <person name="Jagels K."/>
            <person name="James K.D."/>
            <person name="Jones L."/>
            <person name="Jones M."/>
            <person name="Leather S."/>
            <person name="McDonald S."/>
            <person name="McLean J."/>
            <person name="Mooney P."/>
            <person name="Moule S."/>
            <person name="Mungall K.L."/>
            <person name="Murphy L.D."/>
            <person name="Niblett D."/>
            <person name="Odell C."/>
            <person name="Oliver K."/>
            <person name="O'Neil S."/>
            <person name="Pearson D."/>
            <person name="Quail M.A."/>
            <person name="Rabbinowitsch E."/>
            <person name="Rutherford K.M."/>
            <person name="Rutter S."/>
            <person name="Saunders D."/>
            <person name="Seeger K."/>
            <person name="Sharp S."/>
            <person name="Skelton J."/>
            <person name="Simmonds M.N."/>
            <person name="Squares R."/>
            <person name="Squares S."/>
            <person name="Stevens K."/>
            <person name="Taylor K."/>
            <person name="Taylor R.G."/>
            <person name="Tivey A."/>
            <person name="Walsh S.V."/>
            <person name="Warren T."/>
            <person name="Whitehead S."/>
            <person name="Woodward J.R."/>
            <person name="Volckaert G."/>
            <person name="Aert R."/>
            <person name="Robben J."/>
            <person name="Grymonprez B."/>
            <person name="Weltjens I."/>
            <person name="Vanstreels E."/>
            <person name="Rieger M."/>
            <person name="Schaefer M."/>
            <person name="Mueller-Auer S."/>
            <person name="Gabel C."/>
            <person name="Fuchs M."/>
            <person name="Duesterhoeft A."/>
            <person name="Fritzc C."/>
            <person name="Holzer E."/>
            <person name="Moestl D."/>
            <person name="Hilbert H."/>
            <person name="Borzym K."/>
            <person name="Langer I."/>
            <person name="Beck A."/>
            <person name="Lehrach H."/>
            <person name="Reinhardt R."/>
            <person name="Pohl T.M."/>
            <person name="Eger P."/>
            <person name="Zimmermann W."/>
            <person name="Wedler H."/>
            <person name="Wambutt R."/>
            <person name="Purnelle B."/>
            <person name="Goffeau A."/>
            <person name="Cadieu E."/>
            <person name="Dreano S."/>
            <person name="Gloux S."/>
            <person name="Lelaure V."/>
            <person name="Mottier S."/>
            <person name="Galibert F."/>
            <person name="Aves S.J."/>
            <person name="Xiang Z."/>
            <person name="Hunt C."/>
            <person name="Moore K."/>
            <person name="Hurst S.M."/>
            <person name="Lucas M."/>
            <person name="Rochet M."/>
            <person name="Gaillardin C."/>
            <person name="Tallada V.A."/>
            <person name="Garzon A."/>
            <person name="Thode G."/>
            <person name="Daga R.R."/>
            <person name="Cruzado L."/>
            <person name="Jimenez J."/>
            <person name="Sanchez M."/>
            <person name="del Rey F."/>
            <person name="Benito J."/>
            <person name="Dominguez A."/>
            <person name="Revuelta J.L."/>
            <person name="Moreno S."/>
            <person name="Armstrong J."/>
            <person name="Forsburg S.L."/>
            <person name="Cerutti L."/>
            <person name="Lowe T."/>
            <person name="McCombie W.R."/>
            <person name="Paulsen I."/>
            <person name="Potashkin J."/>
            <person name="Shpakovski G.V."/>
            <person name="Ussery D."/>
            <person name="Barrell B.G."/>
            <person name="Nurse P."/>
        </authorList>
    </citation>
    <scope>NUCLEOTIDE SEQUENCE [LARGE SCALE GENOMIC DNA]</scope>
    <source>
        <strain>972 / ATCC 24843</strain>
    </source>
</reference>
<reference key="2">
    <citation type="journal article" date="2000" name="Genes Cells">
        <title>Large-scale screening of intracellular protein localization in living fission yeast cells by the use of a GFP-fusion genomic DNA library.</title>
        <authorList>
            <person name="Ding D.-Q."/>
            <person name="Tomita Y."/>
            <person name="Yamamoto A."/>
            <person name="Chikashige Y."/>
            <person name="Haraguchi T."/>
            <person name="Hiraoka Y."/>
        </authorList>
    </citation>
    <scope>NUCLEOTIDE SEQUENCE [LARGE SCALE GENOMIC DNA] OF 115-311</scope>
    <scope>SUBCELLULAR LOCATION</scope>
    <source>
        <strain>ATCC 38364 / 968</strain>
    </source>
</reference>
<dbReference type="EC" id="2.4.1.260" evidence="1"/>
<dbReference type="EMBL" id="CU329671">
    <property type="protein sequence ID" value="CAA21306.2"/>
    <property type="molecule type" value="Genomic_DNA"/>
</dbReference>
<dbReference type="EMBL" id="AB027846">
    <property type="protein sequence ID" value="BAA87150.1"/>
    <property type="molecule type" value="Genomic_DNA"/>
</dbReference>
<dbReference type="PIR" id="T39659">
    <property type="entry name" value="T39659"/>
</dbReference>
<dbReference type="RefSeq" id="NP_595429.2">
    <property type="nucleotide sequence ID" value="NM_001021337.2"/>
</dbReference>
<dbReference type="BioGRID" id="276606">
    <property type="interactions" value="41"/>
</dbReference>
<dbReference type="FunCoup" id="Q9USD4">
    <property type="interactions" value="201"/>
</dbReference>
<dbReference type="STRING" id="284812.Q9USD4"/>
<dbReference type="CAZy" id="GT22">
    <property type="family name" value="Glycosyltransferase Family 22"/>
</dbReference>
<dbReference type="PaxDb" id="4896-SPBC1734.12c.1"/>
<dbReference type="EnsemblFungi" id="SPBC1734.12c.1">
    <property type="protein sequence ID" value="SPBC1734.12c.1:pep"/>
    <property type="gene ID" value="SPBC1734.12c"/>
</dbReference>
<dbReference type="GeneID" id="2540068"/>
<dbReference type="KEGG" id="spo:2540068"/>
<dbReference type="PomBase" id="SPBC1734.12c">
    <property type="gene designation" value="alg12"/>
</dbReference>
<dbReference type="VEuPathDB" id="FungiDB:SPBC1734.12c"/>
<dbReference type="eggNOG" id="KOG2516">
    <property type="taxonomic scope" value="Eukaryota"/>
</dbReference>
<dbReference type="HOGENOM" id="CLU_008917_0_0_1"/>
<dbReference type="InParanoid" id="Q9USD4"/>
<dbReference type="OMA" id="WWVEVRM"/>
<dbReference type="PhylomeDB" id="Q9USD4"/>
<dbReference type="Reactome" id="R-SPO-446193">
    <property type="pathway name" value="Biosynthesis of the N-glycan precursor (dolichol lipid-linked oligosaccharide, LLO) and transfer to a nascent protein"/>
</dbReference>
<dbReference type="UniPathway" id="UPA00378"/>
<dbReference type="PRO" id="PR:Q9USD4"/>
<dbReference type="Proteomes" id="UP000002485">
    <property type="component" value="Chromosome II"/>
</dbReference>
<dbReference type="GO" id="GO:0005783">
    <property type="term" value="C:endoplasmic reticulum"/>
    <property type="evidence" value="ECO:0007005"/>
    <property type="project" value="PomBase"/>
</dbReference>
<dbReference type="GO" id="GO:0005789">
    <property type="term" value="C:endoplasmic reticulum membrane"/>
    <property type="evidence" value="ECO:0000318"/>
    <property type="project" value="GO_Central"/>
</dbReference>
<dbReference type="GO" id="GO:0098553">
    <property type="term" value="C:lumenal side of endoplasmic reticulum membrane"/>
    <property type="evidence" value="ECO:0000304"/>
    <property type="project" value="PomBase"/>
</dbReference>
<dbReference type="GO" id="GO:0000009">
    <property type="term" value="F:alpha-1,6-mannosyltransferase activity"/>
    <property type="evidence" value="ECO:0000250"/>
    <property type="project" value="UniProtKB"/>
</dbReference>
<dbReference type="GO" id="GO:0052917">
    <property type="term" value="F:dolichyl-P-Man:Man(7)GlcNAc(2)-PP-dolichol alpha-1,6-mannosyltransferase"/>
    <property type="evidence" value="ECO:0000266"/>
    <property type="project" value="PomBase"/>
</dbReference>
<dbReference type="GO" id="GO:0006488">
    <property type="term" value="P:dolichol-linked oligosaccharide biosynthetic process"/>
    <property type="evidence" value="ECO:0000250"/>
    <property type="project" value="UniProtKB"/>
</dbReference>
<dbReference type="GO" id="GO:0006486">
    <property type="term" value="P:protein glycosylation"/>
    <property type="evidence" value="ECO:0000250"/>
    <property type="project" value="UniProtKB"/>
</dbReference>
<dbReference type="GO" id="GO:0006487">
    <property type="term" value="P:protein N-linked glycosylation"/>
    <property type="evidence" value="ECO:0000318"/>
    <property type="project" value="GO_Central"/>
</dbReference>
<dbReference type="Gene3D" id="3.30.10.10">
    <property type="entry name" value="Trypsin Inhibitor V, subunit A"/>
    <property type="match status" value="1"/>
</dbReference>
<dbReference type="InterPro" id="IPR005599">
    <property type="entry name" value="GPI_mannosylTrfase"/>
</dbReference>
<dbReference type="PANTHER" id="PTHR22760:SF1">
    <property type="entry name" value="DOL-P-MAN:MAN(7)GLCNAC(2)-PP-DOL ALPHA-1,6-MANNOSYLTRANSFERASE"/>
    <property type="match status" value="1"/>
</dbReference>
<dbReference type="PANTHER" id="PTHR22760">
    <property type="entry name" value="GLYCOSYLTRANSFERASE"/>
    <property type="match status" value="1"/>
</dbReference>
<dbReference type="Pfam" id="PF03901">
    <property type="entry name" value="Glyco_transf_22"/>
    <property type="match status" value="1"/>
</dbReference>
<gene>
    <name type="primary">alg12</name>
    <name type="ORF">SPBC1734.12c</name>
</gene>
<protein>
    <recommendedName>
        <fullName evidence="1">Probable Dol-P-Man:Man(7)GlcNAc(2)-PP-Dol alpha-1,6-mannosyltransferase</fullName>
        <ecNumber evidence="1">2.4.1.260</ecNumber>
    </recommendedName>
    <alternativeName>
        <fullName>Asparagine-linked glycosylation protein 12 homolog</fullName>
    </alternativeName>
    <alternativeName>
        <fullName>Dolichyl-P-Man:Man(7)GlcNAc(2)-PP-dolichyl-alpha-1,6-mannosyltransferase</fullName>
    </alternativeName>
    <alternativeName>
        <fullName>Mannosyltransferase ALG12 homolog</fullName>
    </alternativeName>
</protein>